<gene>
    <name evidence="1" type="primary">trpD</name>
    <name type="ordered locus">Bamb_0437</name>
</gene>
<dbReference type="EC" id="2.4.2.18" evidence="1"/>
<dbReference type="EMBL" id="CP000440">
    <property type="protein sequence ID" value="ABI85996.1"/>
    <property type="molecule type" value="Genomic_DNA"/>
</dbReference>
<dbReference type="RefSeq" id="WP_011655871.1">
    <property type="nucleotide sequence ID" value="NZ_CP009798.1"/>
</dbReference>
<dbReference type="SMR" id="Q0BIM7"/>
<dbReference type="GeneID" id="93084151"/>
<dbReference type="KEGG" id="bam:Bamb_0437"/>
<dbReference type="PATRIC" id="fig|339670.21.peg.1172"/>
<dbReference type="eggNOG" id="COG0547">
    <property type="taxonomic scope" value="Bacteria"/>
</dbReference>
<dbReference type="UniPathway" id="UPA00035">
    <property type="reaction ID" value="UER00041"/>
</dbReference>
<dbReference type="Proteomes" id="UP000000662">
    <property type="component" value="Chromosome 1"/>
</dbReference>
<dbReference type="GO" id="GO:0005829">
    <property type="term" value="C:cytosol"/>
    <property type="evidence" value="ECO:0007669"/>
    <property type="project" value="TreeGrafter"/>
</dbReference>
<dbReference type="GO" id="GO:0004048">
    <property type="term" value="F:anthranilate phosphoribosyltransferase activity"/>
    <property type="evidence" value="ECO:0007669"/>
    <property type="project" value="UniProtKB-UniRule"/>
</dbReference>
<dbReference type="GO" id="GO:0000287">
    <property type="term" value="F:magnesium ion binding"/>
    <property type="evidence" value="ECO:0007669"/>
    <property type="project" value="UniProtKB-UniRule"/>
</dbReference>
<dbReference type="GO" id="GO:0000162">
    <property type="term" value="P:L-tryptophan biosynthetic process"/>
    <property type="evidence" value="ECO:0007669"/>
    <property type="project" value="UniProtKB-UniRule"/>
</dbReference>
<dbReference type="FunFam" id="1.20.970.10:FF:000006">
    <property type="entry name" value="Anthranilate phosphoribosyltransferase"/>
    <property type="match status" value="1"/>
</dbReference>
<dbReference type="FunFam" id="3.40.1030.10:FF:000002">
    <property type="entry name" value="Anthranilate phosphoribosyltransferase"/>
    <property type="match status" value="1"/>
</dbReference>
<dbReference type="Gene3D" id="3.40.1030.10">
    <property type="entry name" value="Nucleoside phosphorylase/phosphoribosyltransferase catalytic domain"/>
    <property type="match status" value="1"/>
</dbReference>
<dbReference type="Gene3D" id="1.20.970.10">
    <property type="entry name" value="Transferase, Pyrimidine Nucleoside Phosphorylase, Chain C"/>
    <property type="match status" value="1"/>
</dbReference>
<dbReference type="HAMAP" id="MF_00211">
    <property type="entry name" value="TrpD"/>
    <property type="match status" value="1"/>
</dbReference>
<dbReference type="InterPro" id="IPR005940">
    <property type="entry name" value="Anthranilate_Pribosyl_Tfrase"/>
</dbReference>
<dbReference type="InterPro" id="IPR000312">
    <property type="entry name" value="Glycosyl_Trfase_fam3"/>
</dbReference>
<dbReference type="InterPro" id="IPR017459">
    <property type="entry name" value="Glycosyl_Trfase_fam3_N_dom"/>
</dbReference>
<dbReference type="InterPro" id="IPR036320">
    <property type="entry name" value="Glycosyl_Trfase_fam3_N_dom_sf"/>
</dbReference>
<dbReference type="InterPro" id="IPR035902">
    <property type="entry name" value="Nuc_phospho_transferase"/>
</dbReference>
<dbReference type="NCBIfam" id="TIGR01245">
    <property type="entry name" value="trpD"/>
    <property type="match status" value="1"/>
</dbReference>
<dbReference type="PANTHER" id="PTHR43285">
    <property type="entry name" value="ANTHRANILATE PHOSPHORIBOSYLTRANSFERASE"/>
    <property type="match status" value="1"/>
</dbReference>
<dbReference type="PANTHER" id="PTHR43285:SF2">
    <property type="entry name" value="ANTHRANILATE PHOSPHORIBOSYLTRANSFERASE"/>
    <property type="match status" value="1"/>
</dbReference>
<dbReference type="Pfam" id="PF02885">
    <property type="entry name" value="Glycos_trans_3N"/>
    <property type="match status" value="1"/>
</dbReference>
<dbReference type="Pfam" id="PF00591">
    <property type="entry name" value="Glycos_transf_3"/>
    <property type="match status" value="1"/>
</dbReference>
<dbReference type="SUPFAM" id="SSF52418">
    <property type="entry name" value="Nucleoside phosphorylase/phosphoribosyltransferase catalytic domain"/>
    <property type="match status" value="1"/>
</dbReference>
<dbReference type="SUPFAM" id="SSF47648">
    <property type="entry name" value="Nucleoside phosphorylase/phosphoribosyltransferase N-terminal domain"/>
    <property type="match status" value="1"/>
</dbReference>
<feature type="chain" id="PRO_1000042995" description="Anthranilate phosphoribosyltransferase">
    <location>
        <begin position="1"/>
        <end position="343"/>
    </location>
</feature>
<feature type="binding site" evidence="1">
    <location>
        <position position="84"/>
    </location>
    <ligand>
        <name>5-phospho-alpha-D-ribose 1-diphosphate</name>
        <dbReference type="ChEBI" id="CHEBI:58017"/>
    </ligand>
</feature>
<feature type="binding site" evidence="1">
    <location>
        <position position="84"/>
    </location>
    <ligand>
        <name>anthranilate</name>
        <dbReference type="ChEBI" id="CHEBI:16567"/>
        <label>1</label>
    </ligand>
</feature>
<feature type="binding site" evidence="1">
    <location>
        <begin position="87"/>
        <end position="88"/>
    </location>
    <ligand>
        <name>5-phospho-alpha-D-ribose 1-diphosphate</name>
        <dbReference type="ChEBI" id="CHEBI:58017"/>
    </ligand>
</feature>
<feature type="binding site" evidence="1">
    <location>
        <position position="92"/>
    </location>
    <ligand>
        <name>5-phospho-alpha-D-ribose 1-diphosphate</name>
        <dbReference type="ChEBI" id="CHEBI:58017"/>
    </ligand>
</feature>
<feature type="binding site" evidence="1">
    <location>
        <begin position="94"/>
        <end position="97"/>
    </location>
    <ligand>
        <name>5-phospho-alpha-D-ribose 1-diphosphate</name>
        <dbReference type="ChEBI" id="CHEBI:58017"/>
    </ligand>
</feature>
<feature type="binding site" evidence="1">
    <location>
        <position position="96"/>
    </location>
    <ligand>
        <name>Mg(2+)</name>
        <dbReference type="ChEBI" id="CHEBI:18420"/>
        <label>1</label>
    </ligand>
</feature>
<feature type="binding site" evidence="1">
    <location>
        <begin position="112"/>
        <end position="120"/>
    </location>
    <ligand>
        <name>5-phospho-alpha-D-ribose 1-diphosphate</name>
        <dbReference type="ChEBI" id="CHEBI:58017"/>
    </ligand>
</feature>
<feature type="binding site" evidence="1">
    <location>
        <position position="115"/>
    </location>
    <ligand>
        <name>anthranilate</name>
        <dbReference type="ChEBI" id="CHEBI:16567"/>
        <label>1</label>
    </ligand>
</feature>
<feature type="binding site" evidence="1">
    <location>
        <position position="124"/>
    </location>
    <ligand>
        <name>5-phospho-alpha-D-ribose 1-diphosphate</name>
        <dbReference type="ChEBI" id="CHEBI:58017"/>
    </ligand>
</feature>
<feature type="binding site" evidence="1">
    <location>
        <position position="170"/>
    </location>
    <ligand>
        <name>anthranilate</name>
        <dbReference type="ChEBI" id="CHEBI:16567"/>
        <label>2</label>
    </ligand>
</feature>
<feature type="binding site" evidence="1">
    <location>
        <position position="229"/>
    </location>
    <ligand>
        <name>Mg(2+)</name>
        <dbReference type="ChEBI" id="CHEBI:18420"/>
        <label>2</label>
    </ligand>
</feature>
<feature type="binding site" evidence="1">
    <location>
        <position position="230"/>
    </location>
    <ligand>
        <name>Mg(2+)</name>
        <dbReference type="ChEBI" id="CHEBI:18420"/>
        <label>1</label>
    </ligand>
</feature>
<feature type="binding site" evidence="1">
    <location>
        <position position="230"/>
    </location>
    <ligand>
        <name>Mg(2+)</name>
        <dbReference type="ChEBI" id="CHEBI:18420"/>
        <label>2</label>
    </ligand>
</feature>
<comment type="function">
    <text evidence="1">Catalyzes the transfer of the phosphoribosyl group of 5-phosphorylribose-1-pyrophosphate (PRPP) to anthranilate to yield N-(5'-phosphoribosyl)-anthranilate (PRA).</text>
</comment>
<comment type="catalytic activity">
    <reaction evidence="1">
        <text>N-(5-phospho-beta-D-ribosyl)anthranilate + diphosphate = 5-phospho-alpha-D-ribose 1-diphosphate + anthranilate</text>
        <dbReference type="Rhea" id="RHEA:11768"/>
        <dbReference type="ChEBI" id="CHEBI:16567"/>
        <dbReference type="ChEBI" id="CHEBI:18277"/>
        <dbReference type="ChEBI" id="CHEBI:33019"/>
        <dbReference type="ChEBI" id="CHEBI:58017"/>
        <dbReference type="EC" id="2.4.2.18"/>
    </reaction>
</comment>
<comment type="cofactor">
    <cofactor evidence="1">
        <name>Mg(2+)</name>
        <dbReference type="ChEBI" id="CHEBI:18420"/>
    </cofactor>
    <text evidence="1">Binds 2 magnesium ions per monomer.</text>
</comment>
<comment type="pathway">
    <text evidence="1">Amino-acid biosynthesis; L-tryptophan biosynthesis; L-tryptophan from chorismate: step 2/5.</text>
</comment>
<comment type="subunit">
    <text evidence="1">Homodimer.</text>
</comment>
<comment type="similarity">
    <text evidence="1">Belongs to the anthranilate phosphoribosyltransferase family.</text>
</comment>
<sequence length="343" mass="36819">MTITPQEALQRTIEHREIFHDEMLHLMRLIMRGDMSPVMAAAIITGLRVKKETIGEIAAAATVMREFANHVEVQDNSNFVDIVGTGGDGSHTFNISTASMFIAAAAGAKVAKHGNRGVSSKSGSADVLDALGVNIDLQPDQVAASIAETGMGFMFAPNHHPAMKNIAAVRRELGVRTIFNILGPLTNPAGAPNQLMGVFHPDLVGIQVRVMQRLGAQHVLVVYGKDGMDEVSLGAATLVGELRDGKVHEYEIHPEDFGLQMVSNRTLKVENAEESRTMLLGALDNQPGVAREIVTLNAGTALYAANIAESIADGIQLAREAIASGKARAKVDELVRFTQQFKR</sequence>
<protein>
    <recommendedName>
        <fullName evidence="1">Anthranilate phosphoribosyltransferase</fullName>
        <ecNumber evidence="1">2.4.2.18</ecNumber>
    </recommendedName>
</protein>
<evidence type="ECO:0000255" key="1">
    <source>
        <dbReference type="HAMAP-Rule" id="MF_00211"/>
    </source>
</evidence>
<name>TRPD_BURCM</name>
<proteinExistence type="inferred from homology"/>
<accession>Q0BIM7</accession>
<keyword id="KW-0028">Amino-acid biosynthesis</keyword>
<keyword id="KW-0057">Aromatic amino acid biosynthesis</keyword>
<keyword id="KW-0328">Glycosyltransferase</keyword>
<keyword id="KW-0460">Magnesium</keyword>
<keyword id="KW-0479">Metal-binding</keyword>
<keyword id="KW-0808">Transferase</keyword>
<keyword id="KW-0822">Tryptophan biosynthesis</keyword>
<organism>
    <name type="scientific">Burkholderia ambifaria (strain ATCC BAA-244 / DSM 16087 / CCUG 44356 / LMG 19182 / AMMD)</name>
    <name type="common">Burkholderia cepacia (strain AMMD)</name>
    <dbReference type="NCBI Taxonomy" id="339670"/>
    <lineage>
        <taxon>Bacteria</taxon>
        <taxon>Pseudomonadati</taxon>
        <taxon>Pseudomonadota</taxon>
        <taxon>Betaproteobacteria</taxon>
        <taxon>Burkholderiales</taxon>
        <taxon>Burkholderiaceae</taxon>
        <taxon>Burkholderia</taxon>
        <taxon>Burkholderia cepacia complex</taxon>
    </lineage>
</organism>
<reference key="1">
    <citation type="submission" date="2006-08" db="EMBL/GenBank/DDBJ databases">
        <title>Complete sequence of chromosome 1 of Burkholderia cepacia AMMD.</title>
        <authorList>
            <person name="Copeland A."/>
            <person name="Lucas S."/>
            <person name="Lapidus A."/>
            <person name="Barry K."/>
            <person name="Detter J.C."/>
            <person name="Glavina del Rio T."/>
            <person name="Hammon N."/>
            <person name="Israni S."/>
            <person name="Pitluck S."/>
            <person name="Bruce D."/>
            <person name="Chain P."/>
            <person name="Malfatti S."/>
            <person name="Shin M."/>
            <person name="Vergez L."/>
            <person name="Schmutz J."/>
            <person name="Larimer F."/>
            <person name="Land M."/>
            <person name="Hauser L."/>
            <person name="Kyrpides N."/>
            <person name="Kim E."/>
            <person name="Parke J."/>
            <person name="Coenye T."/>
            <person name="Konstantinidis K."/>
            <person name="Ramette A."/>
            <person name="Tiedje J."/>
            <person name="Richardson P."/>
        </authorList>
    </citation>
    <scope>NUCLEOTIDE SEQUENCE [LARGE SCALE GENOMIC DNA]</scope>
    <source>
        <strain>ATCC BAA-244 / DSM 16087 / CCUG 44356 / LMG 19182 / AMMD</strain>
    </source>
</reference>